<comment type="function">
    <text evidence="2">GTP hydrolase that promotes the GTP-dependent binding of aminoacyl-tRNA to the A-site of ribosomes during protein biosynthesis.</text>
</comment>
<comment type="catalytic activity">
    <reaction evidence="2">
        <text>GTP + H2O = GDP + phosphate + H(+)</text>
        <dbReference type="Rhea" id="RHEA:19669"/>
        <dbReference type="ChEBI" id="CHEBI:15377"/>
        <dbReference type="ChEBI" id="CHEBI:15378"/>
        <dbReference type="ChEBI" id="CHEBI:37565"/>
        <dbReference type="ChEBI" id="CHEBI:43474"/>
        <dbReference type="ChEBI" id="CHEBI:58189"/>
        <dbReference type="EC" id="3.6.5.3"/>
    </reaction>
    <physiologicalReaction direction="left-to-right" evidence="2">
        <dbReference type="Rhea" id="RHEA:19670"/>
    </physiologicalReaction>
</comment>
<comment type="subunit">
    <text evidence="2">Monomer.</text>
</comment>
<comment type="subcellular location">
    <subcellularLocation>
        <location evidence="2">Cytoplasm</location>
    </subcellularLocation>
</comment>
<comment type="similarity">
    <text evidence="2">Belongs to the TRAFAC class translation factor GTPase superfamily. Classic translation factor GTPase family. EF-Tu/EF-1A subfamily.</text>
</comment>
<feature type="chain" id="PRO_0000337375" description="Elongation factor Tu">
    <location>
        <begin position="1"/>
        <end position="395"/>
    </location>
</feature>
<feature type="domain" description="tr-type G">
    <location>
        <begin position="6"/>
        <end position="205"/>
    </location>
</feature>
<feature type="region of interest" description="G1" evidence="1">
    <location>
        <begin position="15"/>
        <end position="22"/>
    </location>
</feature>
<feature type="region of interest" description="G2" evidence="1">
    <location>
        <begin position="59"/>
        <end position="63"/>
    </location>
</feature>
<feature type="region of interest" description="G3" evidence="1">
    <location>
        <begin position="80"/>
        <end position="83"/>
    </location>
</feature>
<feature type="region of interest" description="G4" evidence="1">
    <location>
        <begin position="135"/>
        <end position="138"/>
    </location>
</feature>
<feature type="region of interest" description="G5" evidence="1">
    <location>
        <begin position="173"/>
        <end position="175"/>
    </location>
</feature>
<feature type="binding site" evidence="2">
    <location>
        <begin position="15"/>
        <end position="22"/>
    </location>
    <ligand>
        <name>GTP</name>
        <dbReference type="ChEBI" id="CHEBI:37565"/>
    </ligand>
</feature>
<feature type="binding site" evidence="2">
    <location>
        <position position="22"/>
    </location>
    <ligand>
        <name>Mg(2+)</name>
        <dbReference type="ChEBI" id="CHEBI:18420"/>
    </ligand>
</feature>
<feature type="binding site" evidence="2">
    <location>
        <begin position="80"/>
        <end position="84"/>
    </location>
    <ligand>
        <name>GTP</name>
        <dbReference type="ChEBI" id="CHEBI:37565"/>
    </ligand>
</feature>
<feature type="binding site" evidence="2">
    <location>
        <begin position="135"/>
        <end position="138"/>
    </location>
    <ligand>
        <name>GTP</name>
        <dbReference type="ChEBI" id="CHEBI:37565"/>
    </ligand>
</feature>
<organism>
    <name type="scientific">Ehrlichia chaffeensis (strain ATCC CRL-10679 / Arkansas)</name>
    <dbReference type="NCBI Taxonomy" id="205920"/>
    <lineage>
        <taxon>Bacteria</taxon>
        <taxon>Pseudomonadati</taxon>
        <taxon>Pseudomonadota</taxon>
        <taxon>Alphaproteobacteria</taxon>
        <taxon>Rickettsiales</taxon>
        <taxon>Anaplasmataceae</taxon>
        <taxon>Ehrlichia</taxon>
    </lineage>
</organism>
<sequence>MVEERKPHINVGTIGHVDHGKTTLTAALTTVLAKRLSGEGNKSVKYDEIDKAPEEKARGITISTAHVEYETENRHYAHVDCPGHADYIKNMITGAAQMDAAILVVSATDGAMPQTREHILLAKQVGVKDIVVWMNKCDVVDDEEMLSLVEMEIRELLSKYGYPGDDIDVVRGSAVKALEEETGSGVWSEKIMELMNALEKISLPTREKDKPFLMSIEDVFSIPGRGTVVTGRIERGVIRVGDKIEIVGLRDIQSTVCTGVEMFHKALDAGEAGDNAGILLRGIKKEDVERGQVLSAPGQIHSYKKFKAEVYILKKEEGGRHTPFFSNYQPQFYVRTTDVTGSIKLPEGVEMVMPGDNISIEVSLDKPVAIDKGLRFAIREGGRTVGSGIITEILE</sequence>
<reference key="1">
    <citation type="journal article" date="2006" name="PLoS Genet.">
        <title>Comparative genomics of emerging human ehrlichiosis agents.</title>
        <authorList>
            <person name="Dunning Hotopp J.C."/>
            <person name="Lin M."/>
            <person name="Madupu R."/>
            <person name="Crabtree J."/>
            <person name="Angiuoli S.V."/>
            <person name="Eisen J.A."/>
            <person name="Seshadri R."/>
            <person name="Ren Q."/>
            <person name="Wu M."/>
            <person name="Utterback T.R."/>
            <person name="Smith S."/>
            <person name="Lewis M."/>
            <person name="Khouri H."/>
            <person name="Zhang C."/>
            <person name="Niu H."/>
            <person name="Lin Q."/>
            <person name="Ohashi N."/>
            <person name="Zhi N."/>
            <person name="Nelson W.C."/>
            <person name="Brinkac L.M."/>
            <person name="Dodson R.J."/>
            <person name="Rosovitz M.J."/>
            <person name="Sundaram J.P."/>
            <person name="Daugherty S.C."/>
            <person name="Davidsen T."/>
            <person name="Durkin A.S."/>
            <person name="Gwinn M.L."/>
            <person name="Haft D.H."/>
            <person name="Selengut J.D."/>
            <person name="Sullivan S.A."/>
            <person name="Zafar N."/>
            <person name="Zhou L."/>
            <person name="Benahmed F."/>
            <person name="Forberger H."/>
            <person name="Halpin R."/>
            <person name="Mulligan S."/>
            <person name="Robinson J."/>
            <person name="White O."/>
            <person name="Rikihisa Y."/>
            <person name="Tettelin H."/>
        </authorList>
    </citation>
    <scope>NUCLEOTIDE SEQUENCE [LARGE SCALE GENOMIC DNA]</scope>
    <source>
        <strain>ATCC CRL-10679 / Arkansas</strain>
    </source>
</reference>
<evidence type="ECO:0000250" key="1"/>
<evidence type="ECO:0000255" key="2">
    <source>
        <dbReference type="HAMAP-Rule" id="MF_00118"/>
    </source>
</evidence>
<gene>
    <name evidence="2" type="primary">tuf1</name>
    <name type="ordered locus">ECH_0407</name>
</gene>
<gene>
    <name evidence="2" type="primary">tuf2</name>
    <name type="ordered locus">ECH_0960</name>
</gene>
<keyword id="KW-0963">Cytoplasm</keyword>
<keyword id="KW-0251">Elongation factor</keyword>
<keyword id="KW-0342">GTP-binding</keyword>
<keyword id="KW-0378">Hydrolase</keyword>
<keyword id="KW-0460">Magnesium</keyword>
<keyword id="KW-0479">Metal-binding</keyword>
<keyword id="KW-0547">Nucleotide-binding</keyword>
<keyword id="KW-0648">Protein biosynthesis</keyword>
<keyword id="KW-1185">Reference proteome</keyword>
<dbReference type="EC" id="3.6.5.3" evidence="2"/>
<dbReference type="EMBL" id="CP000236">
    <property type="protein sequence ID" value="ABD45144.1"/>
    <property type="molecule type" value="Genomic_DNA"/>
</dbReference>
<dbReference type="EMBL" id="CP000236">
    <property type="protein sequence ID" value="ABD45570.1"/>
    <property type="molecule type" value="Genomic_DNA"/>
</dbReference>
<dbReference type="RefSeq" id="WP_006011505.1">
    <property type="nucleotide sequence ID" value="NC_007799.1"/>
</dbReference>
<dbReference type="SMR" id="Q2GFN6"/>
<dbReference type="STRING" id="205920.ECH_0407"/>
<dbReference type="KEGG" id="ech:ECH_0407"/>
<dbReference type="KEGG" id="ech:ECH_0960"/>
<dbReference type="eggNOG" id="COG0050">
    <property type="taxonomic scope" value="Bacteria"/>
</dbReference>
<dbReference type="HOGENOM" id="CLU_007265_0_1_5"/>
<dbReference type="OrthoDB" id="9803139at2"/>
<dbReference type="Proteomes" id="UP000008320">
    <property type="component" value="Chromosome"/>
</dbReference>
<dbReference type="GO" id="GO:0005829">
    <property type="term" value="C:cytosol"/>
    <property type="evidence" value="ECO:0007669"/>
    <property type="project" value="TreeGrafter"/>
</dbReference>
<dbReference type="GO" id="GO:0005525">
    <property type="term" value="F:GTP binding"/>
    <property type="evidence" value="ECO:0007669"/>
    <property type="project" value="UniProtKB-UniRule"/>
</dbReference>
<dbReference type="GO" id="GO:0003924">
    <property type="term" value="F:GTPase activity"/>
    <property type="evidence" value="ECO:0007669"/>
    <property type="project" value="InterPro"/>
</dbReference>
<dbReference type="GO" id="GO:0097216">
    <property type="term" value="F:guanosine tetraphosphate binding"/>
    <property type="evidence" value="ECO:0007669"/>
    <property type="project" value="UniProtKB-ARBA"/>
</dbReference>
<dbReference type="GO" id="GO:0003746">
    <property type="term" value="F:translation elongation factor activity"/>
    <property type="evidence" value="ECO:0007669"/>
    <property type="project" value="UniProtKB-UniRule"/>
</dbReference>
<dbReference type="CDD" id="cd01884">
    <property type="entry name" value="EF_Tu"/>
    <property type="match status" value="1"/>
</dbReference>
<dbReference type="CDD" id="cd03697">
    <property type="entry name" value="EFTU_II"/>
    <property type="match status" value="1"/>
</dbReference>
<dbReference type="CDD" id="cd03707">
    <property type="entry name" value="EFTU_III"/>
    <property type="match status" value="1"/>
</dbReference>
<dbReference type="FunFam" id="2.40.30.10:FF:000001">
    <property type="entry name" value="Elongation factor Tu"/>
    <property type="match status" value="1"/>
</dbReference>
<dbReference type="FunFam" id="3.40.50.300:FF:000003">
    <property type="entry name" value="Elongation factor Tu"/>
    <property type="match status" value="1"/>
</dbReference>
<dbReference type="Gene3D" id="3.40.50.300">
    <property type="entry name" value="P-loop containing nucleotide triphosphate hydrolases"/>
    <property type="match status" value="1"/>
</dbReference>
<dbReference type="Gene3D" id="2.40.30.10">
    <property type="entry name" value="Translation factors"/>
    <property type="match status" value="2"/>
</dbReference>
<dbReference type="HAMAP" id="MF_00118_B">
    <property type="entry name" value="EF_Tu_B"/>
    <property type="match status" value="1"/>
</dbReference>
<dbReference type="InterPro" id="IPR041709">
    <property type="entry name" value="EF-Tu_GTP-bd"/>
</dbReference>
<dbReference type="InterPro" id="IPR050055">
    <property type="entry name" value="EF-Tu_GTPase"/>
</dbReference>
<dbReference type="InterPro" id="IPR004161">
    <property type="entry name" value="EFTu-like_2"/>
</dbReference>
<dbReference type="InterPro" id="IPR033720">
    <property type="entry name" value="EFTU_2"/>
</dbReference>
<dbReference type="InterPro" id="IPR031157">
    <property type="entry name" value="G_TR_CS"/>
</dbReference>
<dbReference type="InterPro" id="IPR027417">
    <property type="entry name" value="P-loop_NTPase"/>
</dbReference>
<dbReference type="InterPro" id="IPR005225">
    <property type="entry name" value="Small_GTP-bd"/>
</dbReference>
<dbReference type="InterPro" id="IPR000795">
    <property type="entry name" value="T_Tr_GTP-bd_dom"/>
</dbReference>
<dbReference type="InterPro" id="IPR009000">
    <property type="entry name" value="Transl_B-barrel_sf"/>
</dbReference>
<dbReference type="InterPro" id="IPR009001">
    <property type="entry name" value="Transl_elong_EF1A/Init_IF2_C"/>
</dbReference>
<dbReference type="InterPro" id="IPR004541">
    <property type="entry name" value="Transl_elong_EFTu/EF1A_bac/org"/>
</dbReference>
<dbReference type="InterPro" id="IPR004160">
    <property type="entry name" value="Transl_elong_EFTu/EF1A_C"/>
</dbReference>
<dbReference type="NCBIfam" id="TIGR00485">
    <property type="entry name" value="EF-Tu"/>
    <property type="match status" value="1"/>
</dbReference>
<dbReference type="NCBIfam" id="NF000766">
    <property type="entry name" value="PRK00049.1"/>
    <property type="match status" value="1"/>
</dbReference>
<dbReference type="NCBIfam" id="NF009372">
    <property type="entry name" value="PRK12735.1"/>
    <property type="match status" value="1"/>
</dbReference>
<dbReference type="NCBIfam" id="NF009373">
    <property type="entry name" value="PRK12736.1"/>
    <property type="match status" value="1"/>
</dbReference>
<dbReference type="NCBIfam" id="TIGR00231">
    <property type="entry name" value="small_GTP"/>
    <property type="match status" value="1"/>
</dbReference>
<dbReference type="PANTHER" id="PTHR43721:SF22">
    <property type="entry name" value="ELONGATION FACTOR TU, MITOCHONDRIAL"/>
    <property type="match status" value="1"/>
</dbReference>
<dbReference type="PANTHER" id="PTHR43721">
    <property type="entry name" value="ELONGATION FACTOR TU-RELATED"/>
    <property type="match status" value="1"/>
</dbReference>
<dbReference type="Pfam" id="PF00009">
    <property type="entry name" value="GTP_EFTU"/>
    <property type="match status" value="1"/>
</dbReference>
<dbReference type="Pfam" id="PF03144">
    <property type="entry name" value="GTP_EFTU_D2"/>
    <property type="match status" value="1"/>
</dbReference>
<dbReference type="Pfam" id="PF03143">
    <property type="entry name" value="GTP_EFTU_D3"/>
    <property type="match status" value="1"/>
</dbReference>
<dbReference type="PRINTS" id="PR00315">
    <property type="entry name" value="ELONGATNFCT"/>
</dbReference>
<dbReference type="SUPFAM" id="SSF50465">
    <property type="entry name" value="EF-Tu/eEF-1alpha/eIF2-gamma C-terminal domain"/>
    <property type="match status" value="1"/>
</dbReference>
<dbReference type="SUPFAM" id="SSF52540">
    <property type="entry name" value="P-loop containing nucleoside triphosphate hydrolases"/>
    <property type="match status" value="1"/>
</dbReference>
<dbReference type="SUPFAM" id="SSF50447">
    <property type="entry name" value="Translation proteins"/>
    <property type="match status" value="1"/>
</dbReference>
<dbReference type="PROSITE" id="PS00301">
    <property type="entry name" value="G_TR_1"/>
    <property type="match status" value="1"/>
</dbReference>
<dbReference type="PROSITE" id="PS51722">
    <property type="entry name" value="G_TR_2"/>
    <property type="match status" value="1"/>
</dbReference>
<name>EFTU_EHRCR</name>
<protein>
    <recommendedName>
        <fullName evidence="2">Elongation factor Tu</fullName>
        <shortName evidence="2">EF-Tu</shortName>
        <ecNumber evidence="2">3.6.5.3</ecNumber>
    </recommendedName>
</protein>
<accession>Q2GFN6</accession>
<proteinExistence type="inferred from homology"/>